<dbReference type="EC" id="1.2.99.-"/>
<dbReference type="GO" id="GO:0016491">
    <property type="term" value="F:oxidoreductase activity"/>
    <property type="evidence" value="ECO:0007669"/>
    <property type="project" value="UniProtKB-KW"/>
</dbReference>
<comment type="subunit">
    <text>Heterotrimer composed of an alpha, a beta and a gamma chain.</text>
</comment>
<reference key="1">
    <citation type="journal article" date="1996" name="Arch. Biochem. Biophys.">
        <title>A second molybdoprotein aldehyde dehydrogenase from Amycolatopsis methanolica NCIB 11946.</title>
        <authorList>
            <person name="Kim S.W."/>
            <person name="Luykx D.M.A.M."/>
            <person name="de Vries S."/>
            <person name="Duine J.A."/>
        </authorList>
    </citation>
    <scope>PROTEIN SEQUENCE</scope>
    <source>
        <strain>DSM 44096 / JCM 8087 / NBRC 15065 / NCIMB 11946 / NRRL B-24139 / LMD 80.32 / 239</strain>
    </source>
</reference>
<accession>P80707</accession>
<protein>
    <recommendedName>
        <fullName>Formate ester dehydrogenase gamma chain</fullName>
        <shortName>FEDH</shortName>
        <ecNumber>1.2.99.-</ecNumber>
    </recommendedName>
</protein>
<proteinExistence type="evidence at protein level"/>
<organism>
    <name type="scientific">Amycolatopsis methanolica</name>
    <dbReference type="NCBI Taxonomy" id="1814"/>
    <lineage>
        <taxon>Bacteria</taxon>
        <taxon>Bacillati</taxon>
        <taxon>Actinomycetota</taxon>
        <taxon>Actinomycetes</taxon>
        <taxon>Pseudonocardiales</taxon>
        <taxon>Pseudonocardiaceae</taxon>
        <taxon>Amycolatopsis</taxon>
        <taxon>Amycolatopsis methanolica group</taxon>
    </lineage>
</organism>
<keyword id="KW-0903">Direct protein sequencing</keyword>
<keyword id="KW-0560">Oxidoreductase</keyword>
<name>FEDG_AMYME</name>
<feature type="chain" id="PRO_0000063249" description="Formate ester dehydrogenase gamma chain">
    <location>
        <begin position="1"/>
        <end position="24" status="greater than"/>
    </location>
</feature>
<feature type="non-terminal residue">
    <location>
        <position position="24"/>
    </location>
</feature>
<sequence length="24" mass="2746">MRITVNVDGTSYTDEVEPRTLLVH</sequence>